<dbReference type="EMBL" id="CP001144">
    <property type="protein sequence ID" value="ACH74466.1"/>
    <property type="molecule type" value="Genomic_DNA"/>
</dbReference>
<dbReference type="RefSeq" id="WP_001284251.1">
    <property type="nucleotide sequence ID" value="NC_011205.1"/>
</dbReference>
<dbReference type="SMR" id="B5FR39"/>
<dbReference type="KEGG" id="sed:SeD_A1186"/>
<dbReference type="HOGENOM" id="CLU_144710_3_1_6"/>
<dbReference type="Proteomes" id="UP000008322">
    <property type="component" value="Chromosome"/>
</dbReference>
<dbReference type="Gene3D" id="1.10.1660.10">
    <property type="match status" value="1"/>
</dbReference>
<dbReference type="HAMAP" id="MF_01155">
    <property type="entry name" value="CbpM"/>
    <property type="match status" value="1"/>
</dbReference>
<dbReference type="InterPro" id="IPR022835">
    <property type="entry name" value="CbpM"/>
</dbReference>
<dbReference type="NCBIfam" id="NF007617">
    <property type="entry name" value="PRK10265.1"/>
    <property type="match status" value="1"/>
</dbReference>
<dbReference type="Pfam" id="PF13591">
    <property type="entry name" value="MerR_2"/>
    <property type="match status" value="1"/>
</dbReference>
<sequence>MANITVTFTITEFCLHTGVTEEELNEIVGLGVIEPYEDDNADWQFDDRAASVVQRALRLREELALDWPGIAVALTLLEENSRLREENRLLLQRLSRFISHP</sequence>
<organism>
    <name type="scientific">Salmonella dublin (strain CT_02021853)</name>
    <dbReference type="NCBI Taxonomy" id="439851"/>
    <lineage>
        <taxon>Bacteria</taxon>
        <taxon>Pseudomonadati</taxon>
        <taxon>Pseudomonadota</taxon>
        <taxon>Gammaproteobacteria</taxon>
        <taxon>Enterobacterales</taxon>
        <taxon>Enterobacteriaceae</taxon>
        <taxon>Salmonella</taxon>
    </lineage>
</organism>
<name>CBPM_SALDC</name>
<gene>
    <name evidence="1" type="primary">cbpM</name>
    <name type="ordered locus">SeD_A1186</name>
</gene>
<accession>B5FR39</accession>
<proteinExistence type="inferred from homology"/>
<protein>
    <recommendedName>
        <fullName evidence="1">Chaperone modulatory protein CbpM</fullName>
    </recommendedName>
</protein>
<feature type="chain" id="PRO_1000137776" description="Chaperone modulatory protein CbpM">
    <location>
        <begin position="1"/>
        <end position="101"/>
    </location>
</feature>
<evidence type="ECO:0000255" key="1">
    <source>
        <dbReference type="HAMAP-Rule" id="MF_01155"/>
    </source>
</evidence>
<comment type="function">
    <text evidence="1">Interacts with CbpA and inhibits both the DnaJ-like co-chaperone activity and the DNA binding activity of CbpA. Together with CbpA, modulates the activity of the DnaK chaperone system. Does not inhibit the co-chaperone activity of DnaJ.</text>
</comment>
<comment type="similarity">
    <text evidence="1">Belongs to the CbpM family.</text>
</comment>
<reference key="1">
    <citation type="journal article" date="2011" name="J. Bacteriol.">
        <title>Comparative genomics of 28 Salmonella enterica isolates: evidence for CRISPR-mediated adaptive sublineage evolution.</title>
        <authorList>
            <person name="Fricke W.F."/>
            <person name="Mammel M.K."/>
            <person name="McDermott P.F."/>
            <person name="Tartera C."/>
            <person name="White D.G."/>
            <person name="Leclerc J.E."/>
            <person name="Ravel J."/>
            <person name="Cebula T.A."/>
        </authorList>
    </citation>
    <scope>NUCLEOTIDE SEQUENCE [LARGE SCALE GENOMIC DNA]</scope>
    <source>
        <strain>CT_02021853</strain>
    </source>
</reference>